<dbReference type="EC" id="2.7.11.1" evidence="10 14 15"/>
<dbReference type="EMBL" id="AY032950">
    <property type="protein sequence ID" value="AAK44211.1"/>
    <property type="molecule type" value="mRNA"/>
</dbReference>
<dbReference type="EMBL" id="AF346629">
    <property type="protein sequence ID" value="AAK19738.2"/>
    <property type="molecule type" value="mRNA"/>
</dbReference>
<dbReference type="EMBL" id="AK000124">
    <property type="protein sequence ID" value="BAA90958.1"/>
    <property type="molecule type" value="mRNA"/>
</dbReference>
<dbReference type="EMBL" id="AK172800">
    <property type="protein sequence ID" value="BAD18773.1"/>
    <property type="status" value="ALT_INIT"/>
    <property type="molecule type" value="mRNA"/>
</dbReference>
<dbReference type="EMBL" id="AK075193">
    <property type="protein sequence ID" value="BAC11462.1"/>
    <property type="status" value="ALT_INIT"/>
    <property type="molecule type" value="mRNA"/>
</dbReference>
<dbReference type="EMBL" id="BC051024">
    <property type="protein sequence ID" value="AAH51024.1"/>
    <property type="molecule type" value="mRNA"/>
</dbReference>
<dbReference type="CCDS" id="CCDS42035.1"/>
<dbReference type="RefSeq" id="NP_001288141.1">
    <property type="nucleotide sequence ID" value="NM_001301212.1"/>
</dbReference>
<dbReference type="RefSeq" id="NP_060142.3">
    <property type="nucleotide sequence ID" value="NM_017672.5"/>
</dbReference>
<dbReference type="SMR" id="Q96QT4"/>
<dbReference type="BioGRID" id="120177">
    <property type="interactions" value="148"/>
</dbReference>
<dbReference type="CORUM" id="Q96QT4"/>
<dbReference type="FunCoup" id="Q96QT4">
    <property type="interactions" value="1775"/>
</dbReference>
<dbReference type="IntAct" id="Q96QT4">
    <property type="interactions" value="38"/>
</dbReference>
<dbReference type="MINT" id="Q96QT4"/>
<dbReference type="STRING" id="9606.ENSP00000495860"/>
<dbReference type="BindingDB" id="Q96QT4"/>
<dbReference type="ChEMBL" id="CHEMBL1250412"/>
<dbReference type="DrugBank" id="DB04447">
    <property type="generic name" value="1,4-Dithiothreitol"/>
</dbReference>
<dbReference type="DrugBank" id="DB14513">
    <property type="generic name" value="Magnesium"/>
</dbReference>
<dbReference type="DrugBank" id="DB09481">
    <property type="generic name" value="Magnesium carbonate"/>
</dbReference>
<dbReference type="DrugBank" id="DB06757">
    <property type="generic name" value="Manganese cation"/>
</dbReference>
<dbReference type="DrugBank" id="DB00179">
    <property type="generic name" value="Masoprocol"/>
</dbReference>
<dbReference type="DrugBank" id="DB04395">
    <property type="generic name" value="Phosphoaminophosphonic Acid-Adenylate Ester"/>
</dbReference>
<dbReference type="GuidetoPHARMACOLOGY" id="499"/>
<dbReference type="TCDB" id="1.A.4.5.1">
    <property type="family name" value="the transient receptor potential ca2+/cation channel (trp-cc) family"/>
</dbReference>
<dbReference type="CarbonylDB" id="Q96QT4"/>
<dbReference type="iPTMnet" id="Q96QT4"/>
<dbReference type="PhosphoSitePlus" id="Q96QT4"/>
<dbReference type="SwissPalm" id="Q96QT4"/>
<dbReference type="BioMuta" id="TRPM7"/>
<dbReference type="DMDM" id="56404941"/>
<dbReference type="jPOST" id="Q96QT4"/>
<dbReference type="MassIVE" id="Q96QT4"/>
<dbReference type="PaxDb" id="9606-ENSP00000320239"/>
<dbReference type="PeptideAtlas" id="Q96QT4"/>
<dbReference type="ProteomicsDB" id="77898"/>
<dbReference type="Pumba" id="Q96QT4"/>
<dbReference type="Antibodypedia" id="24755">
    <property type="antibodies" value="463 antibodies from 39 providers"/>
</dbReference>
<dbReference type="DNASU" id="54822"/>
<dbReference type="Ensembl" id="ENST00000646667.1">
    <property type="protein sequence ID" value="ENSP00000495860.1"/>
    <property type="gene ID" value="ENSG00000092439.16"/>
</dbReference>
<dbReference type="GeneID" id="54822"/>
<dbReference type="KEGG" id="hsa:54822"/>
<dbReference type="MANE-Select" id="ENST00000646667.1">
    <property type="protein sequence ID" value="ENSP00000495860.1"/>
    <property type="RefSeq nucleotide sequence ID" value="NM_017672.6"/>
    <property type="RefSeq protein sequence ID" value="NP_060142.3"/>
</dbReference>
<dbReference type="UCSC" id="uc001zyt.5">
    <property type="organism name" value="human"/>
</dbReference>
<dbReference type="AGR" id="HGNC:17994"/>
<dbReference type="CTD" id="54822"/>
<dbReference type="DisGeNET" id="54822"/>
<dbReference type="GeneCards" id="TRPM7"/>
<dbReference type="HGNC" id="HGNC:17994">
    <property type="gene designation" value="TRPM7"/>
</dbReference>
<dbReference type="HPA" id="ENSG00000092439">
    <property type="expression patterns" value="Tissue enriched (parathyroid)"/>
</dbReference>
<dbReference type="MalaCards" id="TRPM7"/>
<dbReference type="MIM" id="105500">
    <property type="type" value="phenotype"/>
</dbReference>
<dbReference type="MIM" id="605692">
    <property type="type" value="gene"/>
</dbReference>
<dbReference type="neXtProt" id="NX_Q96QT4"/>
<dbReference type="OpenTargets" id="ENSG00000092439"/>
<dbReference type="Orphanet" id="140957">
    <property type="disease" value="Autosomal dominant macrothrombocytopenia"/>
</dbReference>
<dbReference type="Orphanet" id="90020">
    <property type="disease" value="Parkinson-dementia complex of Guam"/>
</dbReference>
<dbReference type="PharmGKB" id="PA38273"/>
<dbReference type="VEuPathDB" id="HostDB:ENSG00000092439"/>
<dbReference type="eggNOG" id="KOG3614">
    <property type="taxonomic scope" value="Eukaryota"/>
</dbReference>
<dbReference type="GeneTree" id="ENSGT00940000157091"/>
<dbReference type="InParanoid" id="Q96QT4"/>
<dbReference type="OMA" id="SSKDPHX"/>
<dbReference type="OrthoDB" id="301415at2759"/>
<dbReference type="PAN-GO" id="Q96QT4">
    <property type="GO annotations" value="5 GO annotations based on evolutionary models"/>
</dbReference>
<dbReference type="PhylomeDB" id="Q96QT4"/>
<dbReference type="TreeFam" id="TF314204"/>
<dbReference type="PathwayCommons" id="Q96QT4"/>
<dbReference type="Reactome" id="R-HSA-3295583">
    <property type="pathway name" value="TRP channels"/>
</dbReference>
<dbReference type="SignaLink" id="Q96QT4"/>
<dbReference type="SIGNOR" id="Q96QT4"/>
<dbReference type="BioGRID-ORCS" id="54822">
    <property type="hits" value="406 hits in 1198 CRISPR screens"/>
</dbReference>
<dbReference type="ChiTaRS" id="TRPM7">
    <property type="organism name" value="human"/>
</dbReference>
<dbReference type="GeneWiki" id="TRPM7"/>
<dbReference type="GenomeRNAi" id="54822"/>
<dbReference type="Pharos" id="Q96QT4">
    <property type="development level" value="Tchem"/>
</dbReference>
<dbReference type="PRO" id="PR:Q96QT4"/>
<dbReference type="Proteomes" id="UP000005640">
    <property type="component" value="Chromosome 15"/>
</dbReference>
<dbReference type="RNAct" id="Q96QT4">
    <property type="molecule type" value="protein"/>
</dbReference>
<dbReference type="Bgee" id="ENSG00000092439">
    <property type="expression patterns" value="Expressed in left ventricle myocardium and 179 other cell types or tissues"/>
</dbReference>
<dbReference type="ExpressionAtlas" id="Q96QT4">
    <property type="expression patterns" value="baseline and differential"/>
</dbReference>
<dbReference type="GO" id="GO:0031410">
    <property type="term" value="C:cytoplasmic vesicle"/>
    <property type="evidence" value="ECO:0000250"/>
    <property type="project" value="UniProtKB"/>
</dbReference>
<dbReference type="GO" id="GO:0030659">
    <property type="term" value="C:cytoplasmic vesicle membrane"/>
    <property type="evidence" value="ECO:0007669"/>
    <property type="project" value="UniProtKB-SubCell"/>
</dbReference>
<dbReference type="GO" id="GO:0005634">
    <property type="term" value="C:nucleus"/>
    <property type="evidence" value="ECO:0000250"/>
    <property type="project" value="UniProtKB"/>
</dbReference>
<dbReference type="GO" id="GO:0005886">
    <property type="term" value="C:plasma membrane"/>
    <property type="evidence" value="ECO:0000314"/>
    <property type="project" value="UniProtKB"/>
</dbReference>
<dbReference type="GO" id="GO:0001726">
    <property type="term" value="C:ruffle"/>
    <property type="evidence" value="ECO:0007669"/>
    <property type="project" value="Ensembl"/>
</dbReference>
<dbReference type="GO" id="GO:0003779">
    <property type="term" value="F:actin binding"/>
    <property type="evidence" value="ECO:0007669"/>
    <property type="project" value="Ensembl"/>
</dbReference>
<dbReference type="GO" id="GO:0005524">
    <property type="term" value="F:ATP binding"/>
    <property type="evidence" value="ECO:0007669"/>
    <property type="project" value="UniProtKB-KW"/>
</dbReference>
<dbReference type="GO" id="GO:0005262">
    <property type="term" value="F:calcium channel activity"/>
    <property type="evidence" value="ECO:0000314"/>
    <property type="project" value="UniProtKB"/>
</dbReference>
<dbReference type="GO" id="GO:0015095">
    <property type="term" value="F:magnesium ion transmembrane transporter activity"/>
    <property type="evidence" value="ECO:0000314"/>
    <property type="project" value="UniProtKB"/>
</dbReference>
<dbReference type="GO" id="GO:0046872">
    <property type="term" value="F:metal ion binding"/>
    <property type="evidence" value="ECO:0007669"/>
    <property type="project" value="UniProtKB-KW"/>
</dbReference>
<dbReference type="GO" id="GO:0017022">
    <property type="term" value="F:myosin binding"/>
    <property type="evidence" value="ECO:0007669"/>
    <property type="project" value="Ensembl"/>
</dbReference>
<dbReference type="GO" id="GO:0106310">
    <property type="term" value="F:protein serine kinase activity"/>
    <property type="evidence" value="ECO:0007669"/>
    <property type="project" value="RHEA"/>
</dbReference>
<dbReference type="GO" id="GO:0004674">
    <property type="term" value="F:protein serine/threonine kinase activity"/>
    <property type="evidence" value="ECO:0000314"/>
    <property type="project" value="UniProtKB"/>
</dbReference>
<dbReference type="GO" id="GO:0005385">
    <property type="term" value="F:zinc ion transmembrane transporter activity"/>
    <property type="evidence" value="ECO:0007669"/>
    <property type="project" value="Ensembl"/>
</dbReference>
<dbReference type="GO" id="GO:0031032">
    <property type="term" value="P:actomyosin structure organization"/>
    <property type="evidence" value="ECO:0007669"/>
    <property type="project" value="Ensembl"/>
</dbReference>
<dbReference type="GO" id="GO:0070588">
    <property type="term" value="P:calcium ion transmembrane transport"/>
    <property type="evidence" value="ECO:0000314"/>
    <property type="project" value="UniProtKB"/>
</dbReference>
<dbReference type="GO" id="GO:0006816">
    <property type="term" value="P:calcium ion transport"/>
    <property type="evidence" value="ECO:0000318"/>
    <property type="project" value="GO_Central"/>
</dbReference>
<dbReference type="GO" id="GO:0016340">
    <property type="term" value="P:calcium-dependent cell-matrix adhesion"/>
    <property type="evidence" value="ECO:0007669"/>
    <property type="project" value="Ensembl"/>
</dbReference>
<dbReference type="GO" id="GO:0010961">
    <property type="term" value="P:intracellular magnesium ion homeostasis"/>
    <property type="evidence" value="ECO:0000250"/>
    <property type="project" value="UniProtKB"/>
</dbReference>
<dbReference type="GO" id="GO:0010960">
    <property type="term" value="P:magnesium ion homeostasis"/>
    <property type="evidence" value="ECO:0000314"/>
    <property type="project" value="UniProtKB"/>
</dbReference>
<dbReference type="GO" id="GO:0015693">
    <property type="term" value="P:magnesium ion transport"/>
    <property type="evidence" value="ECO:0000314"/>
    <property type="project" value="UniProtKB"/>
</dbReference>
<dbReference type="GO" id="GO:0055080">
    <property type="term" value="P:monoatomic cation homeostasis"/>
    <property type="evidence" value="ECO:0000318"/>
    <property type="project" value="GO_Central"/>
</dbReference>
<dbReference type="GO" id="GO:0098655">
    <property type="term" value="P:monoatomic cation transmembrane transport"/>
    <property type="evidence" value="ECO:0000318"/>
    <property type="project" value="GO_Central"/>
</dbReference>
<dbReference type="GO" id="GO:0070266">
    <property type="term" value="P:necroptotic process"/>
    <property type="evidence" value="ECO:0000315"/>
    <property type="project" value="UniProtKB"/>
</dbReference>
<dbReference type="GO" id="GO:0046777">
    <property type="term" value="P:protein autophosphorylation"/>
    <property type="evidence" value="ECO:0000314"/>
    <property type="project" value="UniProtKB"/>
</dbReference>
<dbReference type="GO" id="GO:0051289">
    <property type="term" value="P:protein homotetramerization"/>
    <property type="evidence" value="ECO:0007669"/>
    <property type="project" value="Ensembl"/>
</dbReference>
<dbReference type="GO" id="GO:0006468">
    <property type="term" value="P:protein phosphorylation"/>
    <property type="evidence" value="ECO:0000314"/>
    <property type="project" value="UniProtKB"/>
</dbReference>
<dbReference type="GO" id="GO:0006829">
    <property type="term" value="P:zinc ion transport"/>
    <property type="evidence" value="ECO:0000250"/>
    <property type="project" value="UniProtKB"/>
</dbReference>
<dbReference type="CDD" id="cd16971">
    <property type="entry name" value="Alpha_kinase_ChaK1_TRMP7"/>
    <property type="match status" value="1"/>
</dbReference>
<dbReference type="FunFam" id="1.20.5.1010:FF:000002">
    <property type="entry name" value="Transient receptor potential cation channel subfamily M member 7"/>
    <property type="match status" value="1"/>
</dbReference>
<dbReference type="FunFam" id="3.20.200.10:FF:000001">
    <property type="entry name" value="Transient receptor potential cation channel, subfamily M, member 7"/>
    <property type="match status" value="1"/>
</dbReference>
<dbReference type="FunFam" id="3.30.200.20:FF:000129">
    <property type="entry name" value="Transient receptor potential cation channel, subfamily M, member 7"/>
    <property type="match status" value="1"/>
</dbReference>
<dbReference type="Gene3D" id="3.20.200.10">
    <property type="entry name" value="MHCK/EF2 kinase"/>
    <property type="match status" value="1"/>
</dbReference>
<dbReference type="Gene3D" id="3.30.200.20">
    <property type="entry name" value="Phosphorylase Kinase, domain 1"/>
    <property type="match status" value="1"/>
</dbReference>
<dbReference type="Gene3D" id="1.20.5.1010">
    <property type="entry name" value="TRPM, tetramerisation domain"/>
    <property type="match status" value="1"/>
</dbReference>
<dbReference type="InterPro" id="IPR004166">
    <property type="entry name" value="a-kinase_dom"/>
</dbReference>
<dbReference type="InterPro" id="IPR005821">
    <property type="entry name" value="Ion_trans_dom"/>
</dbReference>
<dbReference type="InterPro" id="IPR011009">
    <property type="entry name" value="Kinase-like_dom_sf"/>
</dbReference>
<dbReference type="InterPro" id="IPR050927">
    <property type="entry name" value="TRPM"/>
</dbReference>
<dbReference type="InterPro" id="IPR029601">
    <property type="entry name" value="TRPM7_a-kinase_dom"/>
</dbReference>
<dbReference type="InterPro" id="IPR041491">
    <property type="entry name" value="TRPM_SLOG"/>
</dbReference>
<dbReference type="InterPro" id="IPR032415">
    <property type="entry name" value="TRPM_tetra"/>
</dbReference>
<dbReference type="InterPro" id="IPR037162">
    <property type="entry name" value="TRPM_tetra_sf"/>
</dbReference>
<dbReference type="PANTHER" id="PTHR13800:SF8">
    <property type="entry name" value="TRANSIENT RECEPTOR POTENTIAL CATION CHANNEL SUBFAMILY M MEMBER 7"/>
    <property type="match status" value="1"/>
</dbReference>
<dbReference type="PANTHER" id="PTHR13800">
    <property type="entry name" value="TRANSIENT RECEPTOR POTENTIAL CATION CHANNEL, SUBFAMILY M, MEMBER 6"/>
    <property type="match status" value="1"/>
</dbReference>
<dbReference type="Pfam" id="PF02816">
    <property type="entry name" value="Alpha_kinase"/>
    <property type="match status" value="1"/>
</dbReference>
<dbReference type="Pfam" id="PF00520">
    <property type="entry name" value="Ion_trans"/>
    <property type="match status" value="1"/>
</dbReference>
<dbReference type="Pfam" id="PF18139">
    <property type="entry name" value="LSDAT_euk"/>
    <property type="match status" value="1"/>
</dbReference>
<dbReference type="Pfam" id="PF25508">
    <property type="entry name" value="TRPM2"/>
    <property type="match status" value="2"/>
</dbReference>
<dbReference type="Pfam" id="PF16519">
    <property type="entry name" value="TRPM_tetra"/>
    <property type="match status" value="1"/>
</dbReference>
<dbReference type="SMART" id="SM00811">
    <property type="entry name" value="Alpha_kinase"/>
    <property type="match status" value="1"/>
</dbReference>
<dbReference type="SUPFAM" id="SSF56112">
    <property type="entry name" value="Protein kinase-like (PK-like)"/>
    <property type="match status" value="1"/>
</dbReference>
<dbReference type="PROSITE" id="PS51158">
    <property type="entry name" value="ALPHA_KINASE"/>
    <property type="match status" value="1"/>
</dbReference>
<gene>
    <name type="primary">TRPM7</name>
    <name type="synonym">CHAK1</name>
    <name evidence="19" type="synonym">LTRPC7</name>
</gene>
<proteinExistence type="evidence at protein level"/>
<sequence>MSQKSWIESTLTKRECVYIIPSSKDPHRCLPGCQICQQLVRCFCGRLVKQHACFTASLAMKYSDVKLGDHFNQAIEEWSVEKHTEQSPTDAYGVINFQGGSHSYRAKYVRLSYDTKPEVILQLLLKEWQMELPKLVISVHGGMQKFELHPRIKQLLGKGLIKAAVTTGAWILTGGVNTGVAKHVGDALKEHASRSSRKICTIGIAPWGVIENRNDLVGRDVVAPYQTLLNPLSKLNVLNNLHSHFILVDDGTVGKYGAEVRLRRELEKTINQQRIHARIGQGVPVVALIFEGGPNVILTVLEYLQESPPVPVVVCEGTGRAADLLAYIHKQTEEGGNLPDAAEPDIISTIKKTFNFGQNEALHLFQTLMECMKRKELITVFHIGSDEHQDIDVAILTALLKGTNASAFDQLILTLAWDRVDIAKNHVFVYGQQWLVGSLEQAMLDALVMDRVAFVKLLIENGVSMHKFLTIPRLEELYNTKQGPTNPMLFHLVRDVKQGNLPPGYKITLIDIGLVIEYLMGGTYRCTYTRKRFRLIYNSLGGNNRRSGRNTSSSTPQLRKSHESFGNRADKKEKMRHNHFIKTAQPYRPKIDTVMEEGKKKRTKDEIVDIDDPETKRFPYPLNELLIWACLMKRQVMARFLWQHGEESMAKALVACKIYRSMAYEAKQSDLVDDTSEELKQYSNDFGQLAVELLEQSFRQDETMAMKLLTYELKNWSNSTCLKLAVSSRLRPFVAHTCTQMLLSDMWMGRLNMRKNSWYKVILSILVPPAILLLEYKTKAEMSHIPQSQDAHQMTMDDSENNFQNITEEIPMEVFKEVRILDSNEGKNEMEIQMKSKKLPITRKFYAFYHAPIVKFWFNTLAYLGFLMLYTFVVLVQMEQLPSVQEWIVIAYIFTYAIEKVREIFMSEAGKVNQKIKVWFSDYFNISDTIAIISFFIGFGLRFGAKWNFANAYDNHVFVAGRLIYCLNIIFWYVRLLDFLAVNQQAGPYVMMIGKMVANMFYIVVIMALVLLSFGVPRKAILYPHEAPSWTLAKDIVFHPYWMIFGEVYAYEIDVCANDSVIPQICGPGTWLTPFLQAVYLFVQYIIMVNLLIAFFNNVYLQVKAISNIVWKYQRYHFIMAYHEKPVLPPPLIILSHIVSLFCCICKRRKKDKTSDGPKLFLTEEDQKKLHDFEEQCVEMYFNEKDDKFHSGSEERIRVTFERVEQMCIQIKEVGDRVNYIKRSLQSLDSQIGHLQDLSALTVDTLKTLTAQKASEASKVHNEITRELSISKHLAQNLIDDGPVRPSVWKKHGVVNTLSSSLPQGDLESNNPFHCNILMKDDKDPQCNIFGQDLPAVPQRKEFNFPEAGSSSGALFPSAVSPPELRQRLHGVELLKIFNKNQKLGSSSTSIPHLSSPPTKFFVSTPSQPSCKSHLETGTKDQETVCSKATEGDNTEFGAFVGHRDSMDLQRFKETSNKIKILSNNNTSENTLKRVSSLAGFTDCHRTSIPVHSKQAEKISRRPSTEDTHEVDSKAALIPDWLQDRPSNREMPSEEGTLNGLTSPFKPAMDTNYYYSAVERNNLMRLSQSIPFTPVPPRGEPVTVYRLEESSPNILNNSMSSWSQLGLCAKIEFLSKEEMGGGLRRAVKVQCTWSEHDILKSGHLYIIKSFLPEVVNTWSSIYKEDTVLHLCLREIQQQRAAQKLTFAFNQMKPKSIPYSPRFLEVFLLYCHSAGQWFAVEECMTGEFRKYNNNNGDEIIPTNTLEEIMLAFSHWTYEYTRGELLVLDLQGVGENLTDPSVIKAEEKRSCDMVFGPANLGEDAIKNFRAKHHCNSCCRKLKLPDLKRNDYTPDKIIFPQDEPSDLNLQPGNSTKESESTNSVRLML</sequence>
<keyword id="KW-0007">Acetylation</keyword>
<keyword id="KW-0036">Amyotrophic lateral sclerosis</keyword>
<keyword id="KW-0067">ATP-binding</keyword>
<keyword id="KW-0106">Calcium</keyword>
<keyword id="KW-0107">Calcium channel</keyword>
<keyword id="KW-0109">Calcium transport</keyword>
<keyword id="KW-1003">Cell membrane</keyword>
<keyword id="KW-0175">Coiled coil</keyword>
<keyword id="KW-0968">Cytoplasmic vesicle</keyword>
<keyword id="KW-0225">Disease variant</keyword>
<keyword id="KW-0407">Ion channel</keyword>
<keyword id="KW-0406">Ion transport</keyword>
<keyword id="KW-0418">Kinase</keyword>
<keyword id="KW-0449">Lipoprotein</keyword>
<keyword id="KW-0472">Membrane</keyword>
<keyword id="KW-0479">Metal-binding</keyword>
<keyword id="KW-1210">Necrosis</keyword>
<keyword id="KW-0523">Neurodegeneration</keyword>
<keyword id="KW-0547">Nucleotide-binding</keyword>
<keyword id="KW-0539">Nucleus</keyword>
<keyword id="KW-0564">Palmitate</keyword>
<keyword id="KW-0908">Parkinsonism</keyword>
<keyword id="KW-0597">Phosphoprotein</keyword>
<keyword id="KW-1267">Proteomics identification</keyword>
<keyword id="KW-1185">Reference proteome</keyword>
<keyword id="KW-0723">Serine/threonine-protein kinase</keyword>
<keyword id="KW-0808">Transferase</keyword>
<keyword id="KW-0812">Transmembrane</keyword>
<keyword id="KW-1133">Transmembrane helix</keyword>
<keyword id="KW-0813">Transport</keyword>
<keyword id="KW-0862">Zinc</keyword>
<feature type="chain" id="PRO_0000215331" description="Transient receptor potential cation channel subfamily M member 7">
    <location>
        <begin position="1"/>
        <end position="1865"/>
    </location>
</feature>
<feature type="chain" id="PRO_0000461294" description="TRPM7 channel, cleaved form" evidence="2">
    <location>
        <begin position="1"/>
        <end status="unknown"/>
    </location>
</feature>
<feature type="chain" id="PRO_0000461295" description="TRPM7 kinase, cleaved form" evidence="2">
    <location>
        <begin status="unknown"/>
        <end position="1865"/>
    </location>
</feature>
<feature type="topological domain" description="Cytoplasmic" evidence="20">
    <location>
        <begin position="1"/>
        <end position="850"/>
    </location>
</feature>
<feature type="transmembrane region" description="Helical; Name=1" evidence="2">
    <location>
        <begin position="851"/>
        <end position="876"/>
    </location>
</feature>
<feature type="topological domain" description="Extracellular" evidence="20">
    <location>
        <begin position="877"/>
        <end position="882"/>
    </location>
</feature>
<feature type="transmembrane region" description="Helical; Name=2" evidence="2">
    <location>
        <begin position="883"/>
        <end position="904"/>
    </location>
</feature>
<feature type="topological domain" description="Cytoplasmic" evidence="20">
    <location>
        <begin position="905"/>
        <end position="923"/>
    </location>
</feature>
<feature type="transmembrane region" description="Helical; Name=3" evidence="2">
    <location>
        <begin position="924"/>
        <end position="943"/>
    </location>
</feature>
<feature type="topological domain" description="Extracellular" evidence="20">
    <location>
        <begin position="944"/>
        <end position="956"/>
    </location>
</feature>
<feature type="transmembrane region" description="Helical; Name=4" evidence="2">
    <location>
        <begin position="957"/>
        <end position="980"/>
    </location>
</feature>
<feature type="topological domain" description="Cytoplasmic" evidence="20">
    <location>
        <begin position="981"/>
        <end position="999"/>
    </location>
</feature>
<feature type="transmembrane region" description="Helical; Name=5" evidence="2">
    <location>
        <begin position="1000"/>
        <end position="1023"/>
    </location>
</feature>
<feature type="topological domain" description="Extracellular" evidence="20">
    <location>
        <begin position="1024"/>
        <end position="1025"/>
    </location>
</feature>
<feature type="intramembrane region" description="Pore-forming" evidence="2">
    <location>
        <begin position="1026"/>
        <end position="1066"/>
    </location>
</feature>
<feature type="topological domain" description="Extracellular" evidence="20">
    <location>
        <begin position="1067"/>
        <end position="1069"/>
    </location>
</feature>
<feature type="transmembrane region" description="Helical; Name=6" evidence="2">
    <location>
        <begin position="1070"/>
        <end position="1098"/>
    </location>
</feature>
<feature type="topological domain" description="Cytoplasmic" evidence="20">
    <location>
        <begin position="1099"/>
        <end position="1865"/>
    </location>
</feature>
<feature type="domain" description="Alpha-type protein kinase" evidence="4">
    <location>
        <begin position="1594"/>
        <end position="1824"/>
    </location>
</feature>
<feature type="region of interest" description="Disordered" evidence="5">
    <location>
        <begin position="544"/>
        <end position="575"/>
    </location>
</feature>
<feature type="region of interest" description="Disordered" evidence="5">
    <location>
        <begin position="1386"/>
        <end position="1407"/>
    </location>
</feature>
<feature type="region of interest" description="Disordered" evidence="5">
    <location>
        <begin position="1492"/>
        <end position="1511"/>
    </location>
</feature>
<feature type="region of interest" description="Disordered" evidence="5">
    <location>
        <begin position="1524"/>
        <end position="1543"/>
    </location>
</feature>
<feature type="region of interest" description="Disordered" evidence="5">
    <location>
        <begin position="1836"/>
        <end position="1865"/>
    </location>
</feature>
<feature type="coiled-coil region" evidence="1">
    <location>
        <begin position="1198"/>
        <end position="1250"/>
    </location>
</feature>
<feature type="compositionally biased region" description="Low complexity" evidence="5">
    <location>
        <begin position="544"/>
        <end position="555"/>
    </location>
</feature>
<feature type="compositionally biased region" description="Basic and acidic residues" evidence="5">
    <location>
        <begin position="560"/>
        <end position="573"/>
    </location>
</feature>
<feature type="compositionally biased region" description="Low complexity" evidence="5">
    <location>
        <begin position="1386"/>
        <end position="1398"/>
    </location>
</feature>
<feature type="compositionally biased region" description="Basic and acidic residues" evidence="5">
    <location>
        <begin position="1494"/>
        <end position="1511"/>
    </location>
</feature>
<feature type="compositionally biased region" description="Polar residues" evidence="5">
    <location>
        <begin position="1844"/>
        <end position="1865"/>
    </location>
</feature>
<feature type="active site" description="Proton acceptor" evidence="1">
    <location>
        <position position="1767"/>
    </location>
</feature>
<feature type="binding site" evidence="2">
    <location>
        <position position="1621"/>
    </location>
    <ligand>
        <name>ADP</name>
        <dbReference type="ChEBI" id="CHEBI:456216"/>
    </ligand>
</feature>
<feature type="binding site" evidence="2">
    <location>
        <position position="1622"/>
    </location>
    <ligand>
        <name>ADP</name>
        <dbReference type="ChEBI" id="CHEBI:456216"/>
    </ligand>
</feature>
<feature type="binding site" evidence="2">
    <location>
        <position position="1623"/>
    </location>
    <ligand>
        <name>ADP</name>
        <dbReference type="ChEBI" id="CHEBI:456216"/>
    </ligand>
</feature>
<feature type="binding site" evidence="2">
    <location>
        <position position="1624"/>
    </location>
    <ligand>
        <name>ADP</name>
        <dbReference type="ChEBI" id="CHEBI:456216"/>
    </ligand>
</feature>
<feature type="binding site" evidence="2">
    <location>
        <position position="1648"/>
    </location>
    <ligand>
        <name>ADP</name>
        <dbReference type="ChEBI" id="CHEBI:456216"/>
    </ligand>
</feature>
<feature type="binding site" evidence="2">
    <location>
        <position position="1720"/>
    </location>
    <ligand>
        <name>ADP</name>
        <dbReference type="ChEBI" id="CHEBI:456216"/>
    </ligand>
</feature>
<feature type="binding site" evidence="2">
    <location>
        <position position="1721"/>
    </location>
    <ligand>
        <name>ADP</name>
        <dbReference type="ChEBI" id="CHEBI:456216"/>
    </ligand>
</feature>
<feature type="binding site" evidence="2">
    <location>
        <position position="1723"/>
    </location>
    <ligand>
        <name>ADP</name>
        <dbReference type="ChEBI" id="CHEBI:456216"/>
    </ligand>
</feature>
<feature type="binding site" evidence="2">
    <location>
        <position position="1753"/>
    </location>
    <ligand>
        <name>Zn(2+)</name>
        <dbReference type="ChEBI" id="CHEBI:29105"/>
    </ligand>
</feature>
<feature type="binding site" evidence="2">
    <location>
        <position position="1777"/>
    </location>
    <ligand>
        <name>ADP</name>
        <dbReference type="ChEBI" id="CHEBI:456216"/>
    </ligand>
</feature>
<feature type="binding site" evidence="2">
    <location>
        <position position="1810"/>
    </location>
    <ligand>
        <name>Zn(2+)</name>
        <dbReference type="ChEBI" id="CHEBI:29105"/>
    </ligand>
</feature>
<feature type="binding site" evidence="2">
    <location>
        <position position="1812"/>
    </location>
    <ligand>
        <name>Zn(2+)</name>
        <dbReference type="ChEBI" id="CHEBI:29105"/>
    </ligand>
</feature>
<feature type="binding site" evidence="2">
    <location>
        <position position="1816"/>
    </location>
    <ligand>
        <name>Zn(2+)</name>
        <dbReference type="ChEBI" id="CHEBI:29105"/>
    </ligand>
</feature>
<feature type="modified residue" description="N-acetylmethionine" evidence="23">
    <location>
        <position position="1"/>
    </location>
</feature>
<feature type="modified residue" description="Phosphoserine" evidence="24">
    <location>
        <position position="101"/>
    </location>
</feature>
<feature type="modified residue" description="Phosphothreonine; by autocatalysis" evidence="14">
    <location>
        <position position="1163"/>
    </location>
</feature>
<feature type="modified residue" description="Phosphoserine; by autocatalysis" evidence="14">
    <location>
        <position position="1191"/>
    </location>
</feature>
<feature type="modified residue" description="Phosphoserine; by autocatalysis" evidence="14">
    <location>
        <position position="1193"/>
    </location>
</feature>
<feature type="modified residue" description="Phosphoserine" evidence="2">
    <location>
        <position position="1224"/>
    </location>
</feature>
<feature type="modified residue" description="Phosphoserine; by autocatalysis" evidence="14">
    <location>
        <position position="1255"/>
    </location>
</feature>
<feature type="modified residue" description="Phosphoserine; by autocatalysis" evidence="14">
    <location>
        <position position="1258"/>
    </location>
</feature>
<feature type="modified residue" description="Phosphothreonine; by autocatalysis" evidence="14">
    <location>
        <position position="1265"/>
    </location>
</feature>
<feature type="modified residue" description="Phosphoserine; by autocatalysis" evidence="14">
    <location>
        <position position="1287"/>
    </location>
</feature>
<feature type="modified residue" description="Phosphoserine" evidence="2">
    <location>
        <position position="1301"/>
    </location>
</feature>
<feature type="modified residue" description="Phosphoserine; by autocatalysis" evidence="14">
    <location>
        <position position="1358"/>
    </location>
</feature>
<feature type="modified residue" description="Phosphoserine" evidence="14">
    <location>
        <position position="1361"/>
    </location>
</feature>
<feature type="modified residue" description="Phosphoserine" evidence="2">
    <location>
        <position position="1386"/>
    </location>
</feature>
<feature type="modified residue" description="Phosphoserine; by autocatalysis" evidence="14 24">
    <location>
        <position position="1387"/>
    </location>
</feature>
<feature type="modified residue" description="Phosphoserine; by autocatalysis" evidence="14 24">
    <location>
        <position position="1390"/>
    </location>
</feature>
<feature type="modified residue" description="Phosphoserine" evidence="24">
    <location>
        <position position="1395"/>
    </location>
</feature>
<feature type="modified residue" description="Phosphoserine" evidence="14">
    <location>
        <position position="1396"/>
    </location>
</feature>
<feature type="modified residue" description="Phosphoserine; by autocatalysis" evidence="14 24">
    <location>
        <position position="1404"/>
    </location>
</feature>
<feature type="modified residue" description="Phosphothreonine; by autocatalysis" evidence="14">
    <location>
        <position position="1405"/>
    </location>
</feature>
<feature type="modified residue" description="Phosphoserine; by autocatalysis" evidence="14">
    <location>
        <position position="1407"/>
    </location>
</feature>
<feature type="modified residue" description="Phosphothreonine; by autocatalysis" evidence="14">
    <location>
        <position position="1435"/>
    </location>
</feature>
<feature type="modified residue" description="Phosphoserine; by autocatalysis" evidence="14">
    <location>
        <position position="1446"/>
    </location>
</feature>
<feature type="modified residue" description="Phosphothreonine; by autocatalysis" evidence="14">
    <location>
        <position position="1455"/>
    </location>
</feature>
<feature type="modified residue" description="Phosphoserine; by autocatalysis" evidence="14">
    <location>
        <position position="1456"/>
    </location>
</feature>
<feature type="modified residue" description="Phosphoserine; by autocatalysis" evidence="14">
    <location>
        <position position="1463"/>
    </location>
</feature>
<feature type="modified residue" description="Phosphothreonine" evidence="2">
    <location>
        <position position="1467"/>
    </location>
</feature>
<feature type="modified residue" description="Phosphoserine; by autocatalysis" evidence="14">
    <location>
        <position position="1468"/>
    </location>
</feature>
<feature type="modified residue" description="Phosphothreonine; by autocatalysis" evidence="14">
    <location>
        <position position="1471"/>
    </location>
</feature>
<feature type="modified residue" description="Phosphoserine; by autocatalysis" evidence="14">
    <location>
        <position position="1476"/>
    </location>
</feature>
<feature type="modified residue" description="Phosphoserine; by autocatalysis" evidence="14 22 24">
    <location>
        <position position="1477"/>
    </location>
</feature>
<feature type="modified residue" description="Phosphothreonine; by autocatalysis" evidence="14">
    <location>
        <position position="1482"/>
    </location>
</feature>
<feature type="modified residue" description="Phosphoserine; by autocatalysis" evidence="14">
    <location>
        <position position="1493"/>
    </location>
</feature>
<feature type="modified residue" description="Phosphoserine" evidence="2">
    <location>
        <position position="1500"/>
    </location>
</feature>
<feature type="modified residue" description="Phosphoserine; by autocatalysis" evidence="14">
    <location>
        <position position="1504"/>
    </location>
</feature>
<feature type="modified residue" description="Phosphothreonine; by autocatalysis" evidence="14">
    <location>
        <position position="1508"/>
    </location>
</feature>
<feature type="modified residue" description="Phosphoserine; by autocatalysis" evidence="14">
    <location>
        <position position="1513"/>
    </location>
</feature>
<feature type="modified residue" description="Phosphoserine; by autocatalysis" evidence="14 24">
    <location>
        <position position="1527"/>
    </location>
</feature>
<feature type="modified residue" description="Phosphoserine; by autocatalysis" evidence="14">
    <location>
        <position position="1533"/>
    </location>
</feature>
<feature type="modified residue" description="Phosphothreonine; by autocatalysis" evidence="14">
    <location>
        <position position="1537"/>
    </location>
</feature>
<feature type="modified residue" description="Phosphothreonine; by autocatalysis" evidence="14">
    <location>
        <position position="1542"/>
    </location>
</feature>
<feature type="modified residue" description="Phosphoserine; by autocatalysis" evidence="14">
    <location>
        <position position="1543"/>
    </location>
</feature>
<feature type="modified residue" description="Phosphothreonine; by autocatalysis" evidence="14">
    <location>
        <position position="1551"/>
    </location>
</feature>
<feature type="modified residue" description="Phosphoserine; by autocatalysis" evidence="14">
    <location>
        <position position="1567"/>
    </location>
</feature>
<feature type="modified residue" description="Phosphoserine; by autocatalysis" evidence="14 24">
    <location>
        <position position="1569"/>
    </location>
</feature>
<feature type="modified residue" description="Phosphothreonine; by autocatalysis" evidence="14">
    <location>
        <position position="1583"/>
    </location>
</feature>
<feature type="modified residue" description="Phosphoserine; by autocatalysis" evidence="14">
    <location>
        <position position="1598"/>
    </location>
</feature>
<feature type="modified residue" description="Phosphoserine; by autocatalysis" evidence="14">
    <location>
        <position position="1615"/>
    </location>
</feature>
<feature type="modified residue" description="Phosphoserine; by autocatalysis" evidence="14">
    <location>
        <position position="1660"/>
    </location>
</feature>
<feature type="modified residue" description="Phosphothreonine; by autocatalysis" evidence="14">
    <location>
        <position position="1685"/>
    </location>
</feature>
<feature type="modified residue" description="Phosphoserine; by autocatalysis" evidence="14">
    <location>
        <position position="1779"/>
    </location>
</feature>
<feature type="modified residue" description="Phosphothreonine; by autocatalysis" evidence="14">
    <location>
        <position position="1830"/>
    </location>
</feature>
<feature type="modified residue" description="Phosphoserine" evidence="2">
    <location>
        <position position="1851"/>
    </location>
</feature>
<feature type="modified residue" description="Phosphoserine; by autocatalysis" evidence="14">
    <location>
        <position position="1860"/>
    </location>
</feature>
<feature type="lipid moiety-binding region" description="S-palmitoyl cysteine" evidence="21">
    <location>
        <position position="1143"/>
    </location>
</feature>
<feature type="lipid moiety-binding region" description="S-palmitoyl cysteine" evidence="21">
    <location>
        <position position="1144"/>
    </location>
</feature>
<feature type="lipid moiety-binding region" description="S-palmitoyl cysteine" evidence="21">
    <location>
        <position position="1146"/>
    </location>
</feature>
<feature type="sequence variant" id="VAR_042395" description="In dbSNP:rs56064201." evidence="13">
    <original>G</original>
    <variation>V</variation>
    <location>
        <position position="68"/>
    </location>
</feature>
<feature type="sequence variant" id="VAR_042396" description="In an ovarian serous carcinoma sample; somatic mutation." evidence="13">
    <original>S</original>
    <variation>C</variation>
    <location>
        <position position="406"/>
    </location>
</feature>
<feature type="sequence variant" id="VAR_042397" description="In dbSNP:rs55924090." evidence="13">
    <original>I</original>
    <variation>T</variation>
    <location>
        <position position="459"/>
    </location>
</feature>
<feature type="sequence variant" id="VAR_042398" description="In dbSNP:rs56040619." evidence="13">
    <original>K</original>
    <variation>N</variation>
    <location>
        <position position="574"/>
    </location>
</feature>
<feature type="sequence variant" id="VAR_042399" description="In a breast infiltrating ductal carcinoma sample; somatic mutation; dbSNP:rs1040254222." evidence="13">
    <original>T</original>
    <variation>S</variation>
    <location>
        <position position="720"/>
    </location>
</feature>
<feature type="sequence variant" id="VAR_042400" description="In a gastric adenocarcinoma sample; somatic mutation." evidence="13">
    <original>M</original>
    <variation>V</variation>
    <location>
        <position position="830"/>
    </location>
</feature>
<feature type="sequence variant" id="VAR_042401" description="In dbSNP:rs55681028." evidence="13">
    <original>F</original>
    <variation>Y</variation>
    <location>
        <position position="949"/>
    </location>
</feature>
<feature type="sequence variant" id="VAR_052381" description="In dbSNP:rs34530969.">
    <original>A</original>
    <variation>G</variation>
    <location>
        <position position="1033"/>
    </location>
</feature>
<feature type="sequence variant" id="VAR_086707" description="Found in a patient with hypomagnesemia and secondary hypocalcemia; likely pathogenic; de novo variant; causes severely reduced Mg(2+) uptake in transfected cells; dbSNP:rs2059709974." evidence="17">
    <original>G</original>
    <variation>D</variation>
    <location>
        <position position="1046"/>
    </location>
</feature>
<feature type="sequence variant" id="VAR_042402" description="In dbSNP:rs56298128." evidence="13">
    <original>Q</original>
    <variation>R</variation>
    <location>
        <position position="1064"/>
    </location>
</feature>
<feature type="sequence variant" id="VAR_052382" description="In dbSNP:rs34711809.">
    <original>I</original>
    <variation>V</variation>
    <location>
        <position position="1145"/>
    </location>
</feature>
<feature type="sequence variant" id="VAR_042403" description="In dbSNP:rs56090496." evidence="13">
    <original>I</original>
    <variation>T</variation>
    <location>
        <position position="1211"/>
    </location>
</feature>
<feature type="sequence variant" id="VAR_042404" description="In dbSNP:rs56288221." evidence="13">
    <original>A</original>
    <variation>V</variation>
    <location>
        <position position="1254"/>
    </location>
</feature>
<feature type="sequence variant" id="VAR_042405" description="In dbSNP:rs55970334." evidence="13">
    <original>D</original>
    <variation>E</variation>
    <location>
        <position position="1306"/>
    </location>
</feature>
<feature type="sequence variant" id="VAR_042406" description="In dbSNP:rs55840070." evidence="13">
    <original>R</original>
    <variation>K</variation>
    <location>
        <position position="1444"/>
    </location>
</feature>
<feature type="sequence variant" id="VAR_019967" description="Mutant channels are functional but show increased susceptibility to inhibition by intracellular Mg(2+) concentrations compared to wild-type channels; dbSNP:rs8042919." evidence="8 11 13">
    <original>T</original>
    <variation>I</variation>
    <location>
        <position position="1482"/>
    </location>
</feature>
<feature type="mutagenesis site" description="Loss of kinase activity." evidence="7">
    <original>K</original>
    <variation>R</variation>
    <location>
        <position position="1648"/>
    </location>
</feature>
<feature type="mutagenesis site" description="Loss of kinase activity." evidence="7">
    <original>G</original>
    <variation>D</variation>
    <location>
        <position position="1799"/>
    </location>
</feature>
<feature type="sequence conflict" description="In Ref. 4; BAD18773." evidence="20" ref="4">
    <original>EKM</original>
    <variation>KKK</variation>
    <location>
        <begin position="573"/>
        <end position="575"/>
    </location>
</feature>
<feature type="sequence conflict" description="In Ref. 5." evidence="20" ref="5">
    <original>A</original>
    <variation>S</variation>
    <location>
        <position position="998"/>
    </location>
</feature>
<feature type="sequence conflict" description="In Ref. 3; AAK19738." evidence="20" ref="3">
    <location>
        <position position="1496"/>
    </location>
</feature>
<feature type="sequence conflict" description="In Ref. 3; AAK19738." evidence="20" ref="3">
    <original>D</original>
    <variation>V</variation>
    <location>
        <position position="1520"/>
    </location>
</feature>
<comment type="function">
    <text evidence="2 6 7 10 14 15 16 17 18">Bifunctional protein that combines an ion channel with an intrinsic kinase domain, enabling it to modulate cellular functions either by conducting ions through the pore or by phosphorylating downstream proteins via its kinase domain. The channel is highly permeable to divalent cations, specifically calcium (Ca2+), magnesium (Mg2+) and zinc (Zn2+) and mediates their influx (PubMed:11385574, PubMed:12887921, PubMed:15485879, PubMed:24316671, PubMed:35561741, PubMed:36027648). Controls a wide range of biological processes such as Ca2(+), Mg(2+) and Zn(2+) homeostasis, vesicular Zn(2+) release channel and intracellular Ca(2+) signaling, embryonic development, immune responses, cell motility, proliferation and differentiation (By similarity). The C-terminal alpha-kinase domain autophosphorylates cytoplasmic residues of TRPM7 (PubMed:18365021). In vivo, TRPM7 phosphorylates SMAD2, suggesting that TRPM7 kinase may play a role in activating SMAD signaling pathways. In vitro, TRPM7 kinase phosphorylates ANXA1 (annexin A1), myosin II isoforms and a variety of proteins with diverse cellular functions (PubMed:15485879, PubMed:18394644).</text>
</comment>
<comment type="function">
    <molecule>TRPM7 channel, cleaved form</molecule>
    <text evidence="2">The cleaved channel exhibits substantially higher current and potentiates Fas receptor signaling.</text>
</comment>
<comment type="function">
    <molecule>TRPM7 kinase, cleaved form</molecule>
    <text evidence="2">The C-terminal kinase domain can be cleaved from the channel segment in a cell-type-specific fashion. In immune cells, the TRPM7 kinase domain is clipped from the channel domain by caspases in response to Fas-receptor stimulation. The cleaved kinase fragments can translocate to the nucleus, and bind chromatin-remodeling complex proteins in a Zn(2+)-dependent manner to ultimately phosphorylate specific Ser/Thr residues of histones known to be functionally important for cell differentiation and embryonic development.</text>
</comment>
<comment type="catalytic activity">
    <reaction evidence="10 14 15">
        <text>L-seryl-[protein] + ATP = O-phospho-L-seryl-[protein] + ADP + H(+)</text>
        <dbReference type="Rhea" id="RHEA:17989"/>
        <dbReference type="Rhea" id="RHEA-COMP:9863"/>
        <dbReference type="Rhea" id="RHEA-COMP:11604"/>
        <dbReference type="ChEBI" id="CHEBI:15378"/>
        <dbReference type="ChEBI" id="CHEBI:29999"/>
        <dbReference type="ChEBI" id="CHEBI:30616"/>
        <dbReference type="ChEBI" id="CHEBI:83421"/>
        <dbReference type="ChEBI" id="CHEBI:456216"/>
        <dbReference type="EC" id="2.7.11.1"/>
    </reaction>
</comment>
<comment type="catalytic activity">
    <reaction evidence="14 15">
        <text>L-threonyl-[protein] + ATP = O-phospho-L-threonyl-[protein] + ADP + H(+)</text>
        <dbReference type="Rhea" id="RHEA:46608"/>
        <dbReference type="Rhea" id="RHEA-COMP:11060"/>
        <dbReference type="Rhea" id="RHEA-COMP:11605"/>
        <dbReference type="ChEBI" id="CHEBI:15378"/>
        <dbReference type="ChEBI" id="CHEBI:30013"/>
        <dbReference type="ChEBI" id="CHEBI:30616"/>
        <dbReference type="ChEBI" id="CHEBI:61977"/>
        <dbReference type="ChEBI" id="CHEBI:456216"/>
        <dbReference type="EC" id="2.7.11.1"/>
    </reaction>
</comment>
<comment type="catalytic activity">
    <reaction evidence="6 7 17">
        <text>Mg(2+)(in) = Mg(2+)(out)</text>
        <dbReference type="Rhea" id="RHEA:29827"/>
        <dbReference type="ChEBI" id="CHEBI:18420"/>
    </reaction>
</comment>
<comment type="catalytic activity">
    <reaction evidence="6 18">
        <text>Ca(2+)(in) = Ca(2+)(out)</text>
        <dbReference type="Rhea" id="RHEA:29671"/>
        <dbReference type="ChEBI" id="CHEBI:29108"/>
    </reaction>
</comment>
<comment type="catalytic activity">
    <reaction evidence="2">
        <text>Zn(2+)(in) = Zn(2+)(out)</text>
        <dbReference type="Rhea" id="RHEA:29351"/>
        <dbReference type="ChEBI" id="CHEBI:29105"/>
    </reaction>
</comment>
<comment type="cofactor">
    <cofactor evidence="2">
        <name>Zn(2+)</name>
        <dbReference type="ChEBI" id="CHEBI:29105"/>
    </cofactor>
    <text evidence="2">Binds 1 zinc ion per subunit.</text>
</comment>
<comment type="activity regulation">
    <text evidence="2 3 6 11 14">Channel displays constitutive activity. Channel activity is negatively regulated by cytosolic Mg(2+) and Mg-ATP (PubMed:11385574, PubMed:16051700). Channel activity is negatively regulated by low intracellular pH (By similarity). Resting free cytosolic Mg(2+) and Mg-ATP concentrations seem to be sufficient to block native TRPM7 channel activity (By similarity). TRPM7 channel activity is highly dependent on membrane levels of phosphatidylinositol 4,5 bisphosphate (PIP2). PIP2 hydrolysis negatively regulates TRPM7 channel activity (By similarity). TRPM7 kinase activity does not affect channel activity (By similarity). The kinase activity is controlled through the autophosphorylation of a serine/threonine-rich region located N-terminal to the catalytic domain (PubMed:18365021).</text>
</comment>
<comment type="subunit">
    <text evidence="2 3 9 12">Homotetramer (By similarity). Interacts with PLCB1 (By similarity). Forms heteromers with TRPM6; heteromeric channels are functionally different from the homomeric channels (PubMed:14976260, PubMed:16636202).</text>
</comment>
<comment type="subcellular location">
    <subcellularLocation>
        <location evidence="16 17">Cell membrane</location>
        <topology evidence="2">Multi-pass membrane protein</topology>
    </subcellularLocation>
    <subcellularLocation>
        <location evidence="2">Cytoplasmic vesicle membrane</location>
        <topology evidence="2">Multi-pass membrane protein</topology>
    </subcellularLocation>
    <text evidence="2">Localized largely in intracellular Zn(2+)-storage vesicles.</text>
</comment>
<comment type="subcellular location">
    <molecule>TRPM7 kinase, cleaved form</molecule>
    <subcellularLocation>
        <location evidence="2">Nucleus</location>
    </subcellularLocation>
</comment>
<comment type="PTM">
    <text evidence="18">Palmitoylated; palmitoylation at Cys-1143, Cys-1144 and Cys-1146 promotes TRPM7 trafficking from the Golgi to the surface membrane.</text>
</comment>
<comment type="PTM">
    <text evidence="14">Autophosphorylated; autophosphorylation of C-terminus regulates TRPM7 kinase activity towards its substrates.</text>
</comment>
<comment type="PTM">
    <text evidence="2">The C-terminal kinase domain can be cleaved from the channel segment in a cell-type-specific fashion. TRPM7 is cleaved by caspase-8, dissociating the kinase from the ion-conducting pore. The cleaved kinase fragments (M7CKs) can translocate to the cell nucleus and binds chromatin-remodeling complex proteins in a Zn(2+)-dependent manner to ultimately phosphorylate specific Ser/Thr residues of histones.</text>
</comment>
<comment type="disease">
    <disease id="DI-02695">
        <name>Amyotrophic lateral sclerosis-parkinsonism/dementia complex 1</name>
        <acronym>ALS-PDC1</acronym>
        <description>A neurodegenerative disorder characterized by chronic, progressive and uniformly fatal amyotrophic lateral sclerosis and parkinsonism-dementia. Both diseases are known to occur in the same kindred, the same sibship and even the same individual.</description>
        <dbReference type="MIM" id="105500"/>
    </disease>
    <text>Disease susceptibility is associated with variants affecting the gene represented in this entry.</text>
</comment>
<comment type="disease">
    <text evidence="17">TRPM7 variants have been identified as a potential cause of disease in patients suffering from seizures and muscle cramps due to magnesium deficiency and episodes of hypocalcemia.</text>
</comment>
<comment type="similarity">
    <text evidence="20">In the C-terminal section; belongs to the protein kinase superfamily. Alpha-type protein kinase family. ALPK subfamily.</text>
</comment>
<comment type="similarity">
    <text evidence="20">In the N-terminal section; belongs to the transient receptor (TC 1.A.4) family. LTrpC subfamily. TRPM7 sub-subfamily.</text>
</comment>
<comment type="sequence caution" evidence="20">
    <conflict type="erroneous initiation">
        <sequence resource="EMBL-CDS" id="BAC11462"/>
    </conflict>
</comment>
<comment type="sequence caution" evidence="20">
    <conflict type="erroneous initiation">
        <sequence resource="EMBL-CDS" id="BAD18773"/>
    </conflict>
</comment>
<reference key="1">
    <citation type="journal article" date="2001" name="Nature">
        <title>LTRPC7 is a Mg.ATP-regulated divalent cation channel required for cell viability.</title>
        <authorList>
            <person name="Nadler M.J.S."/>
            <person name="Hermosura M.C."/>
            <person name="Inabe K."/>
            <person name="Perraud A.-L."/>
            <person name="Zhu Q."/>
            <person name="Stokes A.J."/>
            <person name="Kurosaki T."/>
            <person name="Kinet J.-P."/>
            <person name="Penner R."/>
            <person name="Scharenberg A.M."/>
            <person name="Fleig A."/>
        </authorList>
    </citation>
    <scope>NUCLEOTIDE SEQUENCE [MRNA]</scope>
    <scope>FUNCTION</scope>
    <scope>TRANSPORTER ACTIVITY</scope>
    <scope>ACTIVITY REGULATION</scope>
</reference>
<reference key="2">
    <citation type="journal article" date="2001" name="Nature">
        <authorList>
            <person name="Nadler M.J.S."/>
            <person name="Hermosura M.C."/>
            <person name="Inabe K."/>
            <person name="Perraud A.-L."/>
            <person name="Zhu Q."/>
            <person name="Stokes A.J."/>
            <person name="Kurosaki T."/>
            <person name="Kinet J.-P."/>
            <person name="Penner R."/>
            <person name="Scharenberg A.M."/>
            <person name="Fleig A."/>
        </authorList>
    </citation>
    <scope>ERRATUM OF PUBMED:11385574</scope>
</reference>
<reference key="3">
    <citation type="journal article" date="2004" name="J. Biol. Chem.">
        <title>Characterization of the protein kinase activity of TRPM7/ChaK1, a protein kinase fused to the transient receptor potential ion channel.</title>
        <authorList>
            <person name="Ryazanova L.V."/>
            <person name="Dorovkov M.V."/>
            <person name="Ansari A."/>
            <person name="Ryazanov A.G."/>
        </authorList>
    </citation>
    <scope>NUCLEOTIDE SEQUENCE [MRNA]</scope>
    <scope>FUNCTION</scope>
</reference>
<reference key="4">
    <citation type="journal article" date="2004" name="Nat. Genet.">
        <title>Complete sequencing and characterization of 21,243 full-length human cDNAs.</title>
        <authorList>
            <person name="Ota T."/>
            <person name="Suzuki Y."/>
            <person name="Nishikawa T."/>
            <person name="Otsuki T."/>
            <person name="Sugiyama T."/>
            <person name="Irie R."/>
            <person name="Wakamatsu A."/>
            <person name="Hayashi K."/>
            <person name="Sato H."/>
            <person name="Nagai K."/>
            <person name="Kimura K."/>
            <person name="Makita H."/>
            <person name="Sekine M."/>
            <person name="Obayashi M."/>
            <person name="Nishi T."/>
            <person name="Shibahara T."/>
            <person name="Tanaka T."/>
            <person name="Ishii S."/>
            <person name="Yamamoto J."/>
            <person name="Saito K."/>
            <person name="Kawai Y."/>
            <person name="Isono Y."/>
            <person name="Nakamura Y."/>
            <person name="Nagahari K."/>
            <person name="Murakami K."/>
            <person name="Yasuda T."/>
            <person name="Iwayanagi T."/>
            <person name="Wagatsuma M."/>
            <person name="Shiratori A."/>
            <person name="Sudo H."/>
            <person name="Hosoiri T."/>
            <person name="Kaku Y."/>
            <person name="Kodaira H."/>
            <person name="Kondo H."/>
            <person name="Sugawara M."/>
            <person name="Takahashi M."/>
            <person name="Kanda K."/>
            <person name="Yokoi T."/>
            <person name="Furuya T."/>
            <person name="Kikkawa E."/>
            <person name="Omura Y."/>
            <person name="Abe K."/>
            <person name="Kamihara K."/>
            <person name="Katsuta N."/>
            <person name="Sato K."/>
            <person name="Tanikawa M."/>
            <person name="Yamazaki M."/>
            <person name="Ninomiya K."/>
            <person name="Ishibashi T."/>
            <person name="Yamashita H."/>
            <person name="Murakawa K."/>
            <person name="Fujimori K."/>
            <person name="Tanai H."/>
            <person name="Kimata M."/>
            <person name="Watanabe M."/>
            <person name="Hiraoka S."/>
            <person name="Chiba Y."/>
            <person name="Ishida S."/>
            <person name="Ono Y."/>
            <person name="Takiguchi S."/>
            <person name="Watanabe S."/>
            <person name="Yosida M."/>
            <person name="Hotuta T."/>
            <person name="Kusano J."/>
            <person name="Kanehori K."/>
            <person name="Takahashi-Fujii A."/>
            <person name="Hara H."/>
            <person name="Tanase T.-O."/>
            <person name="Nomura Y."/>
            <person name="Togiya S."/>
            <person name="Komai F."/>
            <person name="Hara R."/>
            <person name="Takeuchi K."/>
            <person name="Arita M."/>
            <person name="Imose N."/>
            <person name="Musashino K."/>
            <person name="Yuuki H."/>
            <person name="Oshima A."/>
            <person name="Sasaki N."/>
            <person name="Aotsuka S."/>
            <person name="Yoshikawa Y."/>
            <person name="Matsunawa H."/>
            <person name="Ichihara T."/>
            <person name="Shiohata N."/>
            <person name="Sano S."/>
            <person name="Moriya S."/>
            <person name="Momiyama H."/>
            <person name="Satoh N."/>
            <person name="Takami S."/>
            <person name="Terashima Y."/>
            <person name="Suzuki O."/>
            <person name="Nakagawa S."/>
            <person name="Senoh A."/>
            <person name="Mizoguchi H."/>
            <person name="Goto Y."/>
            <person name="Shimizu F."/>
            <person name="Wakebe H."/>
            <person name="Hishigaki H."/>
            <person name="Watanabe T."/>
            <person name="Sugiyama A."/>
            <person name="Takemoto M."/>
            <person name="Kawakami B."/>
            <person name="Yamazaki M."/>
            <person name="Watanabe K."/>
            <person name="Kumagai A."/>
            <person name="Itakura S."/>
            <person name="Fukuzumi Y."/>
            <person name="Fujimori Y."/>
            <person name="Komiyama M."/>
            <person name="Tashiro H."/>
            <person name="Tanigami A."/>
            <person name="Fujiwara T."/>
            <person name="Ono T."/>
            <person name="Yamada K."/>
            <person name="Fujii Y."/>
            <person name="Ozaki K."/>
            <person name="Hirao M."/>
            <person name="Ohmori Y."/>
            <person name="Kawabata A."/>
            <person name="Hikiji T."/>
            <person name="Kobatake N."/>
            <person name="Inagaki H."/>
            <person name="Ikema Y."/>
            <person name="Okamoto S."/>
            <person name="Okitani R."/>
            <person name="Kawakami T."/>
            <person name="Noguchi S."/>
            <person name="Itoh T."/>
            <person name="Shigeta K."/>
            <person name="Senba T."/>
            <person name="Matsumura K."/>
            <person name="Nakajima Y."/>
            <person name="Mizuno T."/>
            <person name="Morinaga M."/>
            <person name="Sasaki M."/>
            <person name="Togashi T."/>
            <person name="Oyama M."/>
            <person name="Hata H."/>
            <person name="Watanabe M."/>
            <person name="Komatsu T."/>
            <person name="Mizushima-Sugano J."/>
            <person name="Satoh T."/>
            <person name="Shirai Y."/>
            <person name="Takahashi Y."/>
            <person name="Nakagawa K."/>
            <person name="Okumura K."/>
            <person name="Nagase T."/>
            <person name="Nomura N."/>
            <person name="Kikuchi H."/>
            <person name="Masuho Y."/>
            <person name="Yamashita R."/>
            <person name="Nakai K."/>
            <person name="Yada T."/>
            <person name="Nakamura Y."/>
            <person name="Ohara O."/>
            <person name="Isogai T."/>
            <person name="Sugano S."/>
        </authorList>
    </citation>
    <scope>NUCLEOTIDE SEQUENCE [LARGE SCALE MRNA] OF 1-575 AND 1096-1865</scope>
    <scope>VARIANT ILE-1482</scope>
    <source>
        <tissue>Colon</tissue>
        <tissue>Placenta</tissue>
    </source>
</reference>
<reference key="5">
    <citation type="journal article" date="2004" name="Genome Res.">
        <title>The status, quality, and expansion of the NIH full-length cDNA project: the Mammalian Gene Collection (MGC).</title>
        <authorList>
            <consortium name="The MGC Project Team"/>
        </authorList>
    </citation>
    <scope>NUCLEOTIDE SEQUENCE [LARGE SCALE MRNA] OF 464-998</scope>
    <source>
        <tissue>Liver</tissue>
    </source>
</reference>
<reference key="6">
    <citation type="journal article" date="2003" name="Cell">
        <title>Regulation of vertebrate cellular Mg2+ homeostasis by TRPM7.</title>
        <authorList>
            <person name="Schmitz C."/>
            <person name="Perraud A.-L."/>
            <person name="Johnson C.O."/>
            <person name="Inabe K."/>
            <person name="Smith M.K."/>
            <person name="Penner R."/>
            <person name="Kurosaki T."/>
            <person name="Fleig A."/>
            <person name="Scharenberg A.M."/>
        </authorList>
    </citation>
    <scope>FUNCTION</scope>
    <scope>TRANSPORTER ACTIVITY</scope>
    <scope>MUTAGENESIS OF LYS-1648 AND GLY-1799</scope>
</reference>
<reference key="7">
    <citation type="journal article" date="2004" name="J. Biol. Chem.">
        <title>Phosphorylation of annexin I by TRPM7 channel-kinase.</title>
        <authorList>
            <person name="Dorovkov M.V."/>
            <person name="Ryazanov A.G."/>
        </authorList>
    </citation>
    <scope>FUNCTION</scope>
    <scope>CATALYTIC ACTIVITY</scope>
</reference>
<reference key="8">
    <citation type="journal article" date="2004" name="Proc. Natl. Acad. Sci. U.S.A.">
        <title>Disruption of TRPM6/TRPM7 complex formation by a mutation in the TRPM6 gene causes hypomagnesemia with secondary hypocalcemia.</title>
        <authorList>
            <person name="Chubanov V."/>
            <person name="Waldegger S."/>
            <person name="Mederos y Schnitzler M."/>
            <person name="Vitzthum H."/>
            <person name="Sassen M.C."/>
            <person name="Seyberth H.W."/>
            <person name="Konrad M."/>
            <person name="Gudermann T."/>
        </authorList>
    </citation>
    <scope>INTERACTION WITH TRPM6</scope>
</reference>
<reference key="9">
    <citation type="journal article" date="2006" name="J. Gen. Physiol.">
        <title>Functional characterization of homo- and heteromeric channel kinases TRPM6 and TRPM7.</title>
        <authorList>
            <person name="Li M."/>
            <person name="Jiang J."/>
            <person name="Yue L."/>
        </authorList>
    </citation>
    <scope>INTERACTION WITH TRPM6</scope>
</reference>
<reference key="10">
    <citation type="journal article" date="2008" name="J. Mol. Biol.">
        <title>TRPM7 regulates myosin IIA filament stability and protein localization by heavy chain phosphorylation.</title>
        <authorList>
            <person name="Clark K."/>
            <person name="Middelbeek J."/>
            <person name="Lasonder E."/>
            <person name="Dulyaninova N.G."/>
            <person name="Morrice N.A."/>
            <person name="Ryazanov A.G."/>
            <person name="Bresnick A.R."/>
            <person name="Figdor C.G."/>
            <person name="van Leeuwen F.N."/>
        </authorList>
    </citation>
    <scope>FUNCTION</scope>
    <scope>CATALYTIC ACTIVITY</scope>
</reference>
<reference key="11">
    <citation type="journal article" date="2008" name="PLoS ONE">
        <title>Massive autophosphorylation of the Ser/Thr-rich domain controls protein kinase activity of TRPM6 and TRPM7.</title>
        <authorList>
            <person name="Clark K."/>
            <person name="Middelbeek J."/>
            <person name="Morrice N.A."/>
            <person name="Figdor C.G."/>
            <person name="Lasonder E."/>
            <person name="van Leeuwen F.N."/>
        </authorList>
    </citation>
    <scope>FUNCTION</scope>
    <scope>CATALYTIC ACTIVITY</scope>
    <scope>ACTIVITY REGULATION</scope>
    <scope>PHOSPHORYLATION AT THR-1163; SER-1191; SER-1193; SER-1255; SER-1258; THR-1265; SER-1287; SER-1358; SER-1361; SER-1387; SER-1390; SER-1396; SER-1404; THR-1405; SER-1407; THR-1435; SER-1446; THR-1455; SER-1456; SER-1463; SER-1468; THR-1471; SER-1476; SER-1477; THR-1482; SER-1493; SER-1504; THR-1508; SER-1513; SER-1527; SER-1533; THR-1537; THR-1542; SER-1543; THR-1551; SER-1567; SER-1569; THR-1583; SER-1598; SER-1615; SER-1660; THR-1685; SER-1779; THR-1830 AND SER-1860</scope>
</reference>
<reference key="12">
    <citation type="journal article" date="2008" name="Proc. Natl. Acad. Sci. U.S.A.">
        <title>A quantitative atlas of mitotic phosphorylation.</title>
        <authorList>
            <person name="Dephoure N."/>
            <person name="Zhou C."/>
            <person name="Villen J."/>
            <person name="Beausoleil S.A."/>
            <person name="Bakalarski C.E."/>
            <person name="Elledge S.J."/>
            <person name="Gygi S.P."/>
        </authorList>
    </citation>
    <scope>PHOSPHORYLATION [LARGE SCALE ANALYSIS] AT SER-1477</scope>
    <scope>IDENTIFICATION BY MASS SPECTROMETRY [LARGE SCALE ANALYSIS]</scope>
    <source>
        <tissue>Cervix carcinoma</tissue>
    </source>
</reference>
<reference key="13">
    <citation type="journal article" date="2009" name="Anal. Chem.">
        <title>Lys-N and trypsin cover complementary parts of the phosphoproteome in a refined SCX-based approach.</title>
        <authorList>
            <person name="Gauci S."/>
            <person name="Helbig A.O."/>
            <person name="Slijper M."/>
            <person name="Krijgsveld J."/>
            <person name="Heck A.J."/>
            <person name="Mohammed S."/>
        </authorList>
    </citation>
    <scope>IDENTIFICATION BY MASS SPECTROMETRY [LARGE SCALE ANALYSIS]</scope>
</reference>
<reference key="14">
    <citation type="journal article" date="2010" name="Sci. Signal.">
        <title>Quantitative phosphoproteomics reveals widespread full phosphorylation site occupancy during mitosis.</title>
        <authorList>
            <person name="Olsen J.V."/>
            <person name="Vermeulen M."/>
            <person name="Santamaria A."/>
            <person name="Kumar C."/>
            <person name="Miller M.L."/>
            <person name="Jensen L.J."/>
            <person name="Gnad F."/>
            <person name="Cox J."/>
            <person name="Jensen T.S."/>
            <person name="Nigg E.A."/>
            <person name="Brunak S."/>
            <person name="Mann M."/>
        </authorList>
    </citation>
    <scope>ACETYLATION [LARGE SCALE ANALYSIS] AT MET-1</scope>
    <scope>IDENTIFICATION BY MASS SPECTROMETRY [LARGE SCALE ANALYSIS]</scope>
    <source>
        <tissue>Cervix carcinoma</tissue>
    </source>
</reference>
<reference key="15">
    <citation type="journal article" date="2013" name="J. Proteome Res.">
        <title>Toward a comprehensive characterization of a human cancer cell phosphoproteome.</title>
        <authorList>
            <person name="Zhou H."/>
            <person name="Di Palma S."/>
            <person name="Preisinger C."/>
            <person name="Peng M."/>
            <person name="Polat A.N."/>
            <person name="Heck A.J."/>
            <person name="Mohammed S."/>
        </authorList>
    </citation>
    <scope>PHOSPHORYLATION [LARGE SCALE ANALYSIS] AT SER-101; SER-1387; SER-1390; SER-1395; SER-1404; SER-1477; SER-1527 AND SER-1569</scope>
    <scope>IDENTIFICATION BY MASS SPECTROMETRY [LARGE SCALE ANALYSIS]</scope>
    <source>
        <tissue>Cervix carcinoma</tissue>
        <tissue>Erythroleukemia</tissue>
    </source>
</reference>
<reference key="16">
    <citation type="journal article" date="2014" name="Nat. Cell Biol.">
        <title>Plasma membrane translocation of trimerized MLKL protein is required for TNF-induced necroptosis.</title>
        <authorList>
            <person name="Cai Z."/>
            <person name="Jitkaew S."/>
            <person name="Zhao J."/>
            <person name="Chiang H.C."/>
            <person name="Choksi S."/>
            <person name="Liu J."/>
            <person name="Ward Y."/>
            <person name="Wu L.G."/>
            <person name="Liu Z.G."/>
        </authorList>
    </citation>
    <scope>FUNCTION</scope>
</reference>
<reference key="17">
    <citation type="journal article" date="2022" name="Cell Calcium">
        <title>Palmitoylation regulates cellular distribution of and transmembrane Ca flux through TrpM7.</title>
        <authorList>
            <person name="Gao X."/>
            <person name="Kuo C.W."/>
            <person name="Main A."/>
            <person name="Brown E."/>
            <person name="Rios F.J."/>
            <person name="Camargo L.L."/>
            <person name="Mary S."/>
            <person name="Wypijewski K."/>
            <person name="Goek C."/>
            <person name="Touyz R.M."/>
            <person name="Fuller W."/>
        </authorList>
    </citation>
    <scope>PALMITOYLATION AT CYS-1143; CYS-1144 AND CYS-1146</scope>
    <scope>FUNCTION</scope>
    <scope>TRANSPORTER ACTIVITY</scope>
</reference>
<reference key="18">
    <citation type="journal article" date="2005" name="Proc. Natl. Acad. Sci. U.S.A.">
        <title>A TRPM7 variant shows altered sensitivity to magnesium that may contribute to the pathogenesis of two Guamanian neurodegenerative disorders.</title>
        <authorList>
            <person name="Hermosura M.C."/>
            <person name="Nayakanti H."/>
            <person name="Dorovkov M.V."/>
            <person name="Calderon F.R."/>
            <person name="Ryazanov A.G."/>
            <person name="Haymer D.S."/>
            <person name="Garruto R.M."/>
        </authorList>
    </citation>
    <scope>VARIANT ILE-1482</scope>
    <scope>CHARACTERIZATION OF VARIANT ILE-1482</scope>
    <scope>ACTIVITY REGULATION</scope>
</reference>
<reference key="19">
    <citation type="journal article" date="2007" name="Nature">
        <title>Patterns of somatic mutation in human cancer genomes.</title>
        <authorList>
            <person name="Greenman C."/>
            <person name="Stephens P."/>
            <person name="Smith R."/>
            <person name="Dalgliesh G.L."/>
            <person name="Hunter C."/>
            <person name="Bignell G."/>
            <person name="Davies H."/>
            <person name="Teague J."/>
            <person name="Butler A."/>
            <person name="Stevens C."/>
            <person name="Edkins S."/>
            <person name="O'Meara S."/>
            <person name="Vastrik I."/>
            <person name="Schmidt E.E."/>
            <person name="Avis T."/>
            <person name="Barthorpe S."/>
            <person name="Bhamra G."/>
            <person name="Buck G."/>
            <person name="Choudhury B."/>
            <person name="Clements J."/>
            <person name="Cole J."/>
            <person name="Dicks E."/>
            <person name="Forbes S."/>
            <person name="Gray K."/>
            <person name="Halliday K."/>
            <person name="Harrison R."/>
            <person name="Hills K."/>
            <person name="Hinton J."/>
            <person name="Jenkinson A."/>
            <person name="Jones D."/>
            <person name="Menzies A."/>
            <person name="Mironenko T."/>
            <person name="Perry J."/>
            <person name="Raine K."/>
            <person name="Richardson D."/>
            <person name="Shepherd R."/>
            <person name="Small A."/>
            <person name="Tofts C."/>
            <person name="Varian J."/>
            <person name="Webb T."/>
            <person name="West S."/>
            <person name="Widaa S."/>
            <person name="Yates A."/>
            <person name="Cahill D.P."/>
            <person name="Louis D.N."/>
            <person name="Goldstraw P."/>
            <person name="Nicholson A.G."/>
            <person name="Brasseur F."/>
            <person name="Looijenga L."/>
            <person name="Weber B.L."/>
            <person name="Chiew Y.-E."/>
            <person name="DeFazio A."/>
            <person name="Greaves M.F."/>
            <person name="Green A.R."/>
            <person name="Campbell P."/>
            <person name="Birney E."/>
            <person name="Easton D.F."/>
            <person name="Chenevix-Trench G."/>
            <person name="Tan M.-H."/>
            <person name="Khoo S.K."/>
            <person name="Teh B.T."/>
            <person name="Yuen S.T."/>
            <person name="Leung S.Y."/>
            <person name="Wooster R."/>
            <person name="Futreal P.A."/>
            <person name="Stratton M.R."/>
        </authorList>
    </citation>
    <scope>VARIANTS [LARGE SCALE ANALYSIS] VAL-68; CYS-406; THR-459; ASN-574; SER-720; VAL-830; TYR-949; ARG-1064; THR-1211; VAL-1254; GLU-1306; LYS-1444 AND ILE-1482</scope>
</reference>
<reference key="20">
    <citation type="journal article" date="2022" name="Nephrol. Dial. Transplant.">
        <title>Possible role for rare TRPM7 variants in patients with hypomagnesemia with secondary hypocalcemia.</title>
        <authorList>
            <person name="Vargas-Poussou R."/>
            <person name="Claverie-Martin F."/>
            <person name="Prot-Bertoye C."/>
            <person name="Carotti V."/>
            <person name="van der Wijst J."/>
            <person name="Perdomo-Ramirez A."/>
            <person name="Fraga-Rodriguez G.M."/>
            <person name="Hureaux M."/>
            <person name="Bos C."/>
            <person name="Latta F."/>
            <person name="Houillier P."/>
            <person name="Hoenderop J."/>
            <person name="de Baaij J."/>
        </authorList>
    </citation>
    <scope>FUNCTION</scope>
    <scope>TRANSPORTER ACTIVITY</scope>
    <scope>SUBCELLULAR LOCATION</scope>
    <scope>VARIANT ASP-1046</scope>
    <scope>CHARACTERIZATION OF VARIANT ASP-1046</scope>
    <scope>INVOLVEMENT IN HYPOMAGNESEMIA WITH SECONDARY HYPOCALCEMIA</scope>
</reference>
<protein>
    <recommendedName>
        <fullName>Transient receptor potential cation channel subfamily M member 7</fullName>
        <ecNumber evidence="10 14 15">2.7.11.1</ecNumber>
    </recommendedName>
    <alternativeName>
        <fullName>Channel-kinase 1</fullName>
    </alternativeName>
    <alternativeName>
        <fullName evidence="19">Long transient receptor potential channel 7</fullName>
        <shortName>LTrpC-7</shortName>
        <shortName>LTrpC7</shortName>
    </alternativeName>
    <component>
        <recommendedName>
            <fullName evidence="2">TRPM7 kinase, cleaved form</fullName>
            <shortName>M7CK</shortName>
        </recommendedName>
    </component>
    <component>
        <recommendedName>
            <fullName evidence="2">TRPM7 channel, cleaved form</fullName>
        </recommendedName>
    </component>
</protein>
<organism>
    <name type="scientific">Homo sapiens</name>
    <name type="common">Human</name>
    <dbReference type="NCBI Taxonomy" id="9606"/>
    <lineage>
        <taxon>Eukaryota</taxon>
        <taxon>Metazoa</taxon>
        <taxon>Chordata</taxon>
        <taxon>Craniata</taxon>
        <taxon>Vertebrata</taxon>
        <taxon>Euteleostomi</taxon>
        <taxon>Mammalia</taxon>
        <taxon>Eutheria</taxon>
        <taxon>Euarchontoglires</taxon>
        <taxon>Primates</taxon>
        <taxon>Haplorrhini</taxon>
        <taxon>Catarrhini</taxon>
        <taxon>Hominidae</taxon>
        <taxon>Homo</taxon>
    </lineage>
</organism>
<name>TRPM7_HUMAN</name>
<accession>Q96QT4</accession>
<accession>Q6ZMF5</accession>
<accession>Q86VJ4</accession>
<accession>Q8NBW2</accession>
<accession>Q9BXB2</accession>
<accession>Q9NXQ2</accession>
<evidence type="ECO:0000250" key="1"/>
<evidence type="ECO:0000250" key="2">
    <source>
        <dbReference type="UniProtKB" id="Q923J1"/>
    </source>
</evidence>
<evidence type="ECO:0000250" key="3">
    <source>
        <dbReference type="UniProtKB" id="Q925B3"/>
    </source>
</evidence>
<evidence type="ECO:0000255" key="4">
    <source>
        <dbReference type="PROSITE-ProRule" id="PRU00501"/>
    </source>
</evidence>
<evidence type="ECO:0000256" key="5">
    <source>
        <dbReference type="SAM" id="MobiDB-lite"/>
    </source>
</evidence>
<evidence type="ECO:0000269" key="6">
    <source>
    </source>
</evidence>
<evidence type="ECO:0000269" key="7">
    <source>
    </source>
</evidence>
<evidence type="ECO:0000269" key="8">
    <source>
    </source>
</evidence>
<evidence type="ECO:0000269" key="9">
    <source>
    </source>
</evidence>
<evidence type="ECO:0000269" key="10">
    <source>
    </source>
</evidence>
<evidence type="ECO:0000269" key="11">
    <source>
    </source>
</evidence>
<evidence type="ECO:0000269" key="12">
    <source>
    </source>
</evidence>
<evidence type="ECO:0000269" key="13">
    <source>
    </source>
</evidence>
<evidence type="ECO:0000269" key="14">
    <source>
    </source>
</evidence>
<evidence type="ECO:0000269" key="15">
    <source>
    </source>
</evidence>
<evidence type="ECO:0000269" key="16">
    <source>
    </source>
</evidence>
<evidence type="ECO:0000269" key="17">
    <source>
    </source>
</evidence>
<evidence type="ECO:0000269" key="18">
    <source>
    </source>
</evidence>
<evidence type="ECO:0000303" key="19">
    <source>
    </source>
</evidence>
<evidence type="ECO:0000305" key="20"/>
<evidence type="ECO:0000305" key="21">
    <source>
    </source>
</evidence>
<evidence type="ECO:0007744" key="22">
    <source>
    </source>
</evidence>
<evidence type="ECO:0007744" key="23">
    <source>
    </source>
</evidence>
<evidence type="ECO:0007744" key="24">
    <source>
    </source>
</evidence>